<comment type="function">
    <text evidence="1">Catalyzes the formation of phosphatidylethanolamine (PtdEtn) from phosphatidylserine (PtdSer).</text>
</comment>
<comment type="catalytic activity">
    <reaction evidence="1">
        <text>a 1,2-diacyl-sn-glycero-3-phospho-L-serine + H(+) = a 1,2-diacyl-sn-glycero-3-phosphoethanolamine + CO2</text>
        <dbReference type="Rhea" id="RHEA:20828"/>
        <dbReference type="ChEBI" id="CHEBI:15378"/>
        <dbReference type="ChEBI" id="CHEBI:16526"/>
        <dbReference type="ChEBI" id="CHEBI:57262"/>
        <dbReference type="ChEBI" id="CHEBI:64612"/>
        <dbReference type="EC" id="4.1.1.65"/>
    </reaction>
</comment>
<comment type="cofactor">
    <cofactor evidence="1">
        <name>pyruvate</name>
        <dbReference type="ChEBI" id="CHEBI:15361"/>
    </cofactor>
    <text evidence="1">Binds 1 pyruvoyl group covalently per subunit.</text>
</comment>
<comment type="pathway">
    <text evidence="1">Phospholipid metabolism; phosphatidylethanolamine biosynthesis; phosphatidylethanolamine from CDP-diacylglycerol: step 2/2.</text>
</comment>
<comment type="subunit">
    <text evidence="1">Heterodimer of a large membrane-associated beta subunit and a small pyruvoyl-containing alpha subunit.</text>
</comment>
<comment type="subcellular location">
    <subcellularLocation>
        <location evidence="1">Cell membrane</location>
        <topology evidence="1">Peripheral membrane protein</topology>
    </subcellularLocation>
</comment>
<comment type="PTM">
    <text evidence="1">Is synthesized initially as an inactive proenzyme. Formation of the active enzyme involves a self-maturation process in which the active site pyruvoyl group is generated from an internal serine residue via an autocatalytic post-translational modification. Two non-identical subunits are generated from the proenzyme in this reaction, and the pyruvate is formed at the N-terminus of the alpha chain, which is derived from the carboxyl end of the proenzyme. The autoendoproteolytic cleavage occurs by a canonical serine protease mechanism, in which the side chain hydroxyl group of the serine supplies its oxygen atom to form the C-terminus of the beta chain, while the remainder of the serine residue undergoes an oxidative deamination to produce ammonia and the pyruvoyl prosthetic group on the alpha chain. During this reaction, the Ser that is part of the protease active site of the proenzyme becomes the pyruvoyl prosthetic group, which constitutes an essential element of the active site of the mature decarboxylase.</text>
</comment>
<comment type="similarity">
    <text evidence="1">Belongs to the phosphatidylserine decarboxylase family. PSD-B subfamily. Prokaryotic type I sub-subfamily.</text>
</comment>
<name>PSD_SHESH</name>
<protein>
    <recommendedName>
        <fullName evidence="1">Phosphatidylserine decarboxylase proenzyme</fullName>
        <ecNumber evidence="1">4.1.1.65</ecNumber>
    </recommendedName>
    <component>
        <recommendedName>
            <fullName evidence="1">Phosphatidylserine decarboxylase alpha chain</fullName>
        </recommendedName>
    </component>
    <component>
        <recommendedName>
            <fullName evidence="1">Phosphatidylserine decarboxylase beta chain</fullName>
        </recommendedName>
    </component>
</protein>
<accession>A8FRC6</accession>
<keyword id="KW-1003">Cell membrane</keyword>
<keyword id="KW-0210">Decarboxylase</keyword>
<keyword id="KW-0444">Lipid biosynthesis</keyword>
<keyword id="KW-0443">Lipid metabolism</keyword>
<keyword id="KW-0456">Lyase</keyword>
<keyword id="KW-0472">Membrane</keyword>
<keyword id="KW-0594">Phospholipid biosynthesis</keyword>
<keyword id="KW-1208">Phospholipid metabolism</keyword>
<keyword id="KW-0670">Pyruvate</keyword>
<keyword id="KW-1185">Reference proteome</keyword>
<keyword id="KW-0865">Zymogen</keyword>
<organism>
    <name type="scientific">Shewanella sediminis (strain HAW-EB3)</name>
    <dbReference type="NCBI Taxonomy" id="425104"/>
    <lineage>
        <taxon>Bacteria</taxon>
        <taxon>Pseudomonadati</taxon>
        <taxon>Pseudomonadota</taxon>
        <taxon>Gammaproteobacteria</taxon>
        <taxon>Alteromonadales</taxon>
        <taxon>Shewanellaceae</taxon>
        <taxon>Shewanella</taxon>
    </lineage>
</organism>
<reference key="1">
    <citation type="submission" date="2007-08" db="EMBL/GenBank/DDBJ databases">
        <title>Complete sequence of Shewanella sediminis HAW-EB3.</title>
        <authorList>
            <consortium name="US DOE Joint Genome Institute"/>
            <person name="Copeland A."/>
            <person name="Lucas S."/>
            <person name="Lapidus A."/>
            <person name="Barry K."/>
            <person name="Glavina del Rio T."/>
            <person name="Dalin E."/>
            <person name="Tice H."/>
            <person name="Pitluck S."/>
            <person name="Chertkov O."/>
            <person name="Brettin T."/>
            <person name="Bruce D."/>
            <person name="Detter J.C."/>
            <person name="Han C."/>
            <person name="Schmutz J."/>
            <person name="Larimer F."/>
            <person name="Land M."/>
            <person name="Hauser L."/>
            <person name="Kyrpides N."/>
            <person name="Kim E."/>
            <person name="Zhao J.-S."/>
            <person name="Richardson P."/>
        </authorList>
    </citation>
    <scope>NUCLEOTIDE SEQUENCE [LARGE SCALE GENOMIC DNA]</scope>
    <source>
        <strain>HAW-EB3</strain>
    </source>
</reference>
<proteinExistence type="inferred from homology"/>
<feature type="chain" id="PRO_1000082908" description="Phosphatidylserine decarboxylase beta chain" evidence="1">
    <location>
        <begin position="1"/>
        <end position="251"/>
    </location>
</feature>
<feature type="chain" id="PRO_1000082909" description="Phosphatidylserine decarboxylase alpha chain" evidence="1">
    <location>
        <begin position="252"/>
        <end position="287"/>
    </location>
</feature>
<feature type="active site" description="Charge relay system; for autoendoproteolytic cleavage activity" evidence="1">
    <location>
        <position position="89"/>
    </location>
</feature>
<feature type="active site" description="Charge relay system; for autoendoproteolytic cleavage activity" evidence="1">
    <location>
        <position position="146"/>
    </location>
</feature>
<feature type="active site" description="Charge relay system; for autoendoproteolytic cleavage activity" evidence="1">
    <location>
        <position position="252"/>
    </location>
</feature>
<feature type="active site" description="Schiff-base intermediate with substrate; via pyruvic acid; for decarboxylase activity" evidence="1">
    <location>
        <position position="252"/>
    </location>
</feature>
<feature type="site" description="Cleavage (non-hydrolytic); by autocatalysis" evidence="1">
    <location>
        <begin position="251"/>
        <end position="252"/>
    </location>
</feature>
<feature type="modified residue" description="Pyruvic acid (Ser); by autocatalysis" evidence="1">
    <location>
        <position position="252"/>
    </location>
</feature>
<dbReference type="EC" id="4.1.1.65" evidence="1"/>
<dbReference type="EMBL" id="CP000821">
    <property type="protein sequence ID" value="ABV35399.1"/>
    <property type="molecule type" value="Genomic_DNA"/>
</dbReference>
<dbReference type="RefSeq" id="WP_012141135.1">
    <property type="nucleotide sequence ID" value="NC_009831.1"/>
</dbReference>
<dbReference type="SMR" id="A8FRC6"/>
<dbReference type="STRING" id="425104.Ssed_0788"/>
<dbReference type="KEGG" id="sse:Ssed_0788"/>
<dbReference type="eggNOG" id="COG0688">
    <property type="taxonomic scope" value="Bacteria"/>
</dbReference>
<dbReference type="HOGENOM" id="CLU_029061_4_1_6"/>
<dbReference type="OrthoDB" id="9802030at2"/>
<dbReference type="UniPathway" id="UPA00558">
    <property type="reaction ID" value="UER00616"/>
</dbReference>
<dbReference type="Proteomes" id="UP000002015">
    <property type="component" value="Chromosome"/>
</dbReference>
<dbReference type="GO" id="GO:0005886">
    <property type="term" value="C:plasma membrane"/>
    <property type="evidence" value="ECO:0007669"/>
    <property type="project" value="UniProtKB-SubCell"/>
</dbReference>
<dbReference type="GO" id="GO:0004609">
    <property type="term" value="F:phosphatidylserine decarboxylase activity"/>
    <property type="evidence" value="ECO:0007669"/>
    <property type="project" value="UniProtKB-UniRule"/>
</dbReference>
<dbReference type="GO" id="GO:0006646">
    <property type="term" value="P:phosphatidylethanolamine biosynthetic process"/>
    <property type="evidence" value="ECO:0007669"/>
    <property type="project" value="UniProtKB-UniRule"/>
</dbReference>
<dbReference type="HAMAP" id="MF_00662">
    <property type="entry name" value="PS_decarb_PSD_B_type1"/>
    <property type="match status" value="1"/>
</dbReference>
<dbReference type="InterPro" id="IPR003817">
    <property type="entry name" value="PS_Dcarbxylase"/>
</dbReference>
<dbReference type="InterPro" id="IPR033177">
    <property type="entry name" value="PSD-B"/>
</dbReference>
<dbReference type="InterPro" id="IPR033178">
    <property type="entry name" value="PSD_type1_pro"/>
</dbReference>
<dbReference type="NCBIfam" id="TIGR00163">
    <property type="entry name" value="PS_decarb"/>
    <property type="match status" value="1"/>
</dbReference>
<dbReference type="PANTHER" id="PTHR10067">
    <property type="entry name" value="PHOSPHATIDYLSERINE DECARBOXYLASE"/>
    <property type="match status" value="1"/>
</dbReference>
<dbReference type="PANTHER" id="PTHR10067:SF6">
    <property type="entry name" value="PHOSPHATIDYLSERINE DECARBOXYLASE PROENZYME, MITOCHONDRIAL"/>
    <property type="match status" value="1"/>
</dbReference>
<dbReference type="Pfam" id="PF02666">
    <property type="entry name" value="PS_Dcarbxylase"/>
    <property type="match status" value="1"/>
</dbReference>
<sequence length="287" mass="31629">MDKIKIALQYMMPKHLISRLVGKLAAAELGSITTAAIKWFIKQYKIDMSEAAQSEPEAYTTFNNFFTRALKPGIRPLFDDKDYIVHPVDGAISQCGPIKGDQIFQAKGHEYSSLALLGNQADDAKRFEDGDFATIYLAPKDYHRIHMPIKGTLSKMTYVPGDLFSVNPLTAENVPGLFARNERVVALFETEIGPMAMVLVGATIVASIETVWAGTVTPPAGKKVFTWDYPTEGPDVITLDKGDEMGRFKLGSTVVMLFAKDALDEFAKDVVPKAVTRMGQPFAKIED</sequence>
<evidence type="ECO:0000255" key="1">
    <source>
        <dbReference type="HAMAP-Rule" id="MF_00662"/>
    </source>
</evidence>
<gene>
    <name evidence="1" type="primary">psd</name>
    <name type="ordered locus">Ssed_0788</name>
</gene>